<protein>
    <recommendedName>
        <fullName evidence="1">tRNA U34 carboxymethyltransferase</fullName>
        <ecNumber evidence="1">2.5.1.-</ecNumber>
    </recommendedName>
</protein>
<organism>
    <name type="scientific">Pseudoalteromonas atlantica (strain T6c / ATCC BAA-1087)</name>
    <dbReference type="NCBI Taxonomy" id="3042615"/>
    <lineage>
        <taxon>Bacteria</taxon>
        <taxon>Pseudomonadati</taxon>
        <taxon>Pseudomonadota</taxon>
        <taxon>Gammaproteobacteria</taxon>
        <taxon>Alteromonadales</taxon>
        <taxon>Alteromonadaceae</taxon>
        <taxon>Paraglaciecola</taxon>
    </lineage>
</organism>
<keyword id="KW-0808">Transferase</keyword>
<keyword id="KW-0819">tRNA processing</keyword>
<reference key="1">
    <citation type="submission" date="2006-06" db="EMBL/GenBank/DDBJ databases">
        <title>Complete sequence of Pseudoalteromonas atlantica T6c.</title>
        <authorList>
            <consortium name="US DOE Joint Genome Institute"/>
            <person name="Copeland A."/>
            <person name="Lucas S."/>
            <person name="Lapidus A."/>
            <person name="Barry K."/>
            <person name="Detter J.C."/>
            <person name="Glavina del Rio T."/>
            <person name="Hammon N."/>
            <person name="Israni S."/>
            <person name="Dalin E."/>
            <person name="Tice H."/>
            <person name="Pitluck S."/>
            <person name="Saunders E."/>
            <person name="Brettin T."/>
            <person name="Bruce D."/>
            <person name="Han C."/>
            <person name="Tapia R."/>
            <person name="Gilna P."/>
            <person name="Schmutz J."/>
            <person name="Larimer F."/>
            <person name="Land M."/>
            <person name="Hauser L."/>
            <person name="Kyrpides N."/>
            <person name="Kim E."/>
            <person name="Karls A.C."/>
            <person name="Bartlett D."/>
            <person name="Higgins B.P."/>
            <person name="Richardson P."/>
        </authorList>
    </citation>
    <scope>NUCLEOTIDE SEQUENCE [LARGE SCALE GENOMIC DNA]</scope>
    <source>
        <strain>T6c / ATCC BAA-1087</strain>
    </source>
</reference>
<dbReference type="EC" id="2.5.1.-" evidence="1"/>
<dbReference type="EMBL" id="CP000388">
    <property type="protein sequence ID" value="ABG42525.1"/>
    <property type="molecule type" value="Genomic_DNA"/>
</dbReference>
<dbReference type="RefSeq" id="WP_011576724.1">
    <property type="nucleotide sequence ID" value="NC_008228.1"/>
</dbReference>
<dbReference type="SMR" id="Q15NL3"/>
<dbReference type="STRING" id="342610.Patl_4026"/>
<dbReference type="KEGG" id="pat:Patl_4026"/>
<dbReference type="eggNOG" id="COG2227">
    <property type="taxonomic scope" value="Bacteria"/>
</dbReference>
<dbReference type="HOGENOM" id="CLU_052665_0_0_6"/>
<dbReference type="OrthoDB" id="9773188at2"/>
<dbReference type="Proteomes" id="UP000001981">
    <property type="component" value="Chromosome"/>
</dbReference>
<dbReference type="GO" id="GO:0008168">
    <property type="term" value="F:methyltransferase activity"/>
    <property type="evidence" value="ECO:0007669"/>
    <property type="project" value="TreeGrafter"/>
</dbReference>
<dbReference type="GO" id="GO:0016765">
    <property type="term" value="F:transferase activity, transferring alkyl or aryl (other than methyl) groups"/>
    <property type="evidence" value="ECO:0007669"/>
    <property type="project" value="UniProtKB-UniRule"/>
</dbReference>
<dbReference type="GO" id="GO:0002098">
    <property type="term" value="P:tRNA wobble uridine modification"/>
    <property type="evidence" value="ECO:0007669"/>
    <property type="project" value="InterPro"/>
</dbReference>
<dbReference type="CDD" id="cd02440">
    <property type="entry name" value="AdoMet_MTases"/>
    <property type="match status" value="1"/>
</dbReference>
<dbReference type="Gene3D" id="3.40.50.150">
    <property type="entry name" value="Vaccinia Virus protein VP39"/>
    <property type="match status" value="1"/>
</dbReference>
<dbReference type="HAMAP" id="MF_01590">
    <property type="entry name" value="tRNA_carboxymethyltr_CmoB"/>
    <property type="match status" value="1"/>
</dbReference>
<dbReference type="InterPro" id="IPR010017">
    <property type="entry name" value="CmoB"/>
</dbReference>
<dbReference type="InterPro" id="IPR027555">
    <property type="entry name" value="Mo5U34_MeTrfas-like"/>
</dbReference>
<dbReference type="InterPro" id="IPR029063">
    <property type="entry name" value="SAM-dependent_MTases_sf"/>
</dbReference>
<dbReference type="NCBIfam" id="NF011650">
    <property type="entry name" value="PRK15068.1"/>
    <property type="match status" value="1"/>
</dbReference>
<dbReference type="NCBIfam" id="TIGR00452">
    <property type="entry name" value="tRNA 5-methoxyuridine(34)/uridine 5-oxyacetic acid(34) synthase CmoB"/>
    <property type="match status" value="1"/>
</dbReference>
<dbReference type="PANTHER" id="PTHR43464">
    <property type="entry name" value="METHYLTRANSFERASE"/>
    <property type="match status" value="1"/>
</dbReference>
<dbReference type="PANTHER" id="PTHR43464:SF95">
    <property type="entry name" value="TRNA U34 CARBOXYMETHYLTRANSFERASE"/>
    <property type="match status" value="1"/>
</dbReference>
<dbReference type="Pfam" id="PF08003">
    <property type="entry name" value="Methyltransf_9"/>
    <property type="match status" value="1"/>
</dbReference>
<dbReference type="SUPFAM" id="SSF53335">
    <property type="entry name" value="S-adenosyl-L-methionine-dependent methyltransferases"/>
    <property type="match status" value="1"/>
</dbReference>
<proteinExistence type="inferred from homology"/>
<feature type="chain" id="PRO_0000313942" description="tRNA U34 carboxymethyltransferase">
    <location>
        <begin position="1"/>
        <end position="323"/>
    </location>
</feature>
<feature type="binding site" evidence="1">
    <location>
        <position position="93"/>
    </location>
    <ligand>
        <name>carboxy-S-adenosyl-L-methionine</name>
        <dbReference type="ChEBI" id="CHEBI:134278"/>
    </ligand>
</feature>
<feature type="binding site" evidence="1">
    <location>
        <position position="107"/>
    </location>
    <ligand>
        <name>carboxy-S-adenosyl-L-methionine</name>
        <dbReference type="ChEBI" id="CHEBI:134278"/>
    </ligand>
</feature>
<feature type="binding site" evidence="1">
    <location>
        <position position="112"/>
    </location>
    <ligand>
        <name>carboxy-S-adenosyl-L-methionine</name>
        <dbReference type="ChEBI" id="CHEBI:134278"/>
    </ligand>
</feature>
<feature type="binding site" evidence="1">
    <location>
        <position position="132"/>
    </location>
    <ligand>
        <name>carboxy-S-adenosyl-L-methionine</name>
        <dbReference type="ChEBI" id="CHEBI:134278"/>
    </ligand>
</feature>
<feature type="binding site" evidence="1">
    <location>
        <begin position="154"/>
        <end position="156"/>
    </location>
    <ligand>
        <name>carboxy-S-adenosyl-L-methionine</name>
        <dbReference type="ChEBI" id="CHEBI:134278"/>
    </ligand>
</feature>
<feature type="binding site" evidence="1">
    <location>
        <begin position="182"/>
        <end position="183"/>
    </location>
    <ligand>
        <name>carboxy-S-adenosyl-L-methionine</name>
        <dbReference type="ChEBI" id="CHEBI:134278"/>
    </ligand>
</feature>
<feature type="binding site" evidence="1">
    <location>
        <position position="197"/>
    </location>
    <ligand>
        <name>carboxy-S-adenosyl-L-methionine</name>
        <dbReference type="ChEBI" id="CHEBI:134278"/>
    </ligand>
</feature>
<feature type="binding site" evidence="1">
    <location>
        <position position="201"/>
    </location>
    <ligand>
        <name>carboxy-S-adenosyl-L-methionine</name>
        <dbReference type="ChEBI" id="CHEBI:134278"/>
    </ligand>
</feature>
<feature type="binding site" evidence="1">
    <location>
        <position position="316"/>
    </location>
    <ligand>
        <name>carboxy-S-adenosyl-L-methionine</name>
        <dbReference type="ChEBI" id="CHEBI:134278"/>
    </ligand>
</feature>
<evidence type="ECO:0000255" key="1">
    <source>
        <dbReference type="HAMAP-Rule" id="MF_01590"/>
    </source>
</evidence>
<comment type="function">
    <text evidence="1">Catalyzes carboxymethyl transfer from carboxy-S-adenosyl-L-methionine (Cx-SAM) to 5-hydroxyuridine (ho5U) to form 5-carboxymethoxyuridine (cmo5U) at position 34 in tRNAs.</text>
</comment>
<comment type="catalytic activity">
    <reaction evidence="1">
        <text>carboxy-S-adenosyl-L-methionine + 5-hydroxyuridine(34) in tRNA = 5-carboxymethoxyuridine(34) in tRNA + S-adenosyl-L-homocysteine + H(+)</text>
        <dbReference type="Rhea" id="RHEA:52848"/>
        <dbReference type="Rhea" id="RHEA-COMP:13381"/>
        <dbReference type="Rhea" id="RHEA-COMP:13383"/>
        <dbReference type="ChEBI" id="CHEBI:15378"/>
        <dbReference type="ChEBI" id="CHEBI:57856"/>
        <dbReference type="ChEBI" id="CHEBI:134278"/>
        <dbReference type="ChEBI" id="CHEBI:136877"/>
        <dbReference type="ChEBI" id="CHEBI:136879"/>
    </reaction>
</comment>
<comment type="subunit">
    <text evidence="1">Homotetramer.</text>
</comment>
<comment type="similarity">
    <text evidence="1">Belongs to the class I-like SAM-binding methyltransferase superfamily. CmoB family.</text>
</comment>
<gene>
    <name evidence="1" type="primary">cmoB</name>
    <name type="ordered locus">Patl_4026</name>
</gene>
<name>CMOB_PSEA6</name>
<sequence>MSVPWFNQFYKEIADSPLSAWLELLPGQISTWQKEQLHGDFNKWVKLLGKLPQTHPSEIELKERVEFGLQSEINEYTQKQIIGLLKQFMPWRKGPFHIHGIHIDTEWRSDWKWERVQPHIQSLENRYVLDVGCGSGYHMWRMLGENAKMVVGADPSQLFLMQFQATKHFNPDPRIHLLPVGVEQLPEKNAFDTVFSMGVLYHRKSPLDFLQQLKNQLRPGGELILETLVVEGDENTVLMAGDRYAQMRNVWFLPSTDALCLWMKRLGFKNVRVVDLAKTTIEEQRATQWMDSQSLVDFLDPNDHSKTIEGYPAPLRAVVVAER</sequence>
<accession>Q15NL3</accession>